<organism>
    <name type="scientific">Vanderwaltozyma polyspora (strain ATCC 22028 / DSM 70294 / BCRC 21397 / CBS 2163 / NBRC 10782 / NRRL Y-8283 / UCD 57-17)</name>
    <name type="common">Kluyveromyces polysporus</name>
    <dbReference type="NCBI Taxonomy" id="436907"/>
    <lineage>
        <taxon>Eukaryota</taxon>
        <taxon>Fungi</taxon>
        <taxon>Dikarya</taxon>
        <taxon>Ascomycota</taxon>
        <taxon>Saccharomycotina</taxon>
        <taxon>Saccharomycetes</taxon>
        <taxon>Saccharomycetales</taxon>
        <taxon>Saccharomycetaceae</taxon>
        <taxon>Vanderwaltozyma</taxon>
    </lineage>
</organism>
<feature type="chain" id="PRO_0000366370" description="Eukaryotic translation initiation factor 3 subunit A">
    <location>
        <begin position="1"/>
        <end position="942"/>
    </location>
</feature>
<feature type="domain" description="PCI" evidence="2">
    <location>
        <begin position="320"/>
        <end position="494"/>
    </location>
</feature>
<feature type="region of interest" description="Disordered" evidence="3">
    <location>
        <begin position="502"/>
        <end position="546"/>
    </location>
</feature>
<feature type="region of interest" description="Disordered" evidence="3">
    <location>
        <begin position="836"/>
        <end position="942"/>
    </location>
</feature>
<feature type="coiled-coil region" evidence="1">
    <location>
        <begin position="499"/>
        <end position="529"/>
    </location>
</feature>
<feature type="coiled-coil region" evidence="1">
    <location>
        <begin position="588"/>
        <end position="669"/>
    </location>
</feature>
<feature type="coiled-coil region" evidence="1">
    <location>
        <begin position="705"/>
        <end position="734"/>
    </location>
</feature>
<feature type="coiled-coil region" evidence="1">
    <location>
        <begin position="821"/>
        <end position="912"/>
    </location>
</feature>
<feature type="compositionally biased region" description="Acidic residues" evidence="3">
    <location>
        <begin position="504"/>
        <end position="538"/>
    </location>
</feature>
<feature type="compositionally biased region" description="Basic and acidic residues" evidence="3">
    <location>
        <begin position="836"/>
        <end position="870"/>
    </location>
</feature>
<feature type="compositionally biased region" description="Basic and acidic residues" evidence="3">
    <location>
        <begin position="889"/>
        <end position="911"/>
    </location>
</feature>
<reference key="1">
    <citation type="journal article" date="2007" name="Proc. Natl. Acad. Sci. U.S.A.">
        <title>Independent sorting-out of thousands of duplicated gene pairs in two yeast species descended from a whole-genome duplication.</title>
        <authorList>
            <person name="Scannell D.R."/>
            <person name="Frank A.C."/>
            <person name="Conant G.C."/>
            <person name="Byrne K.P."/>
            <person name="Woolfit M."/>
            <person name="Wolfe K.H."/>
        </authorList>
    </citation>
    <scope>NUCLEOTIDE SEQUENCE [LARGE SCALE GENOMIC DNA]</scope>
    <source>
        <strain>ATCC 22028 / DSM 70294 / BCRC 21397 / CBS 2163 / NBRC 10782 / NRRL Y-8283 / UCD 57-17</strain>
    </source>
</reference>
<gene>
    <name evidence="1" type="primary">TIF32</name>
    <name type="ORF">Kpol_1065p43</name>
</gene>
<keyword id="KW-0175">Coiled coil</keyword>
<keyword id="KW-0963">Cytoplasm</keyword>
<keyword id="KW-0396">Initiation factor</keyword>
<keyword id="KW-0648">Protein biosynthesis</keyword>
<keyword id="KW-1185">Reference proteome</keyword>
<keyword id="KW-0694">RNA-binding</keyword>
<protein>
    <recommendedName>
        <fullName evidence="1">Eukaryotic translation initiation factor 3 subunit A</fullName>
        <shortName evidence="1">eIF3a</shortName>
    </recommendedName>
    <alternativeName>
        <fullName evidence="1">Eukaryotic translation initiation factor 3 110 kDa subunit homolog</fullName>
        <shortName evidence="1">eIF3 p110</shortName>
    </alternativeName>
    <alternativeName>
        <fullName evidence="1">Translation initiation factor eIF3, p110 subunit homolog</fullName>
    </alternativeName>
</protein>
<dbReference type="EMBL" id="DS480412">
    <property type="protein sequence ID" value="EDO17027.1"/>
    <property type="molecule type" value="Genomic_DNA"/>
</dbReference>
<dbReference type="RefSeq" id="XP_001644885.1">
    <property type="nucleotide sequence ID" value="XM_001644835.1"/>
</dbReference>
<dbReference type="SMR" id="A7TL64"/>
<dbReference type="FunCoup" id="A7TL64">
    <property type="interactions" value="1387"/>
</dbReference>
<dbReference type="STRING" id="436907.A7TL64"/>
<dbReference type="GeneID" id="5545199"/>
<dbReference type="KEGG" id="vpo:Kpol_1065p43"/>
<dbReference type="eggNOG" id="KOG2072">
    <property type="taxonomic scope" value="Eukaryota"/>
</dbReference>
<dbReference type="HOGENOM" id="CLU_002096_2_1_1"/>
<dbReference type="InParanoid" id="A7TL64"/>
<dbReference type="OMA" id="EHITNKR"/>
<dbReference type="OrthoDB" id="18884at2759"/>
<dbReference type="PhylomeDB" id="A7TL64"/>
<dbReference type="Proteomes" id="UP000000267">
    <property type="component" value="Unassembled WGS sequence"/>
</dbReference>
<dbReference type="GO" id="GO:0010494">
    <property type="term" value="C:cytoplasmic stress granule"/>
    <property type="evidence" value="ECO:0007669"/>
    <property type="project" value="EnsemblFungi"/>
</dbReference>
<dbReference type="GO" id="GO:0016282">
    <property type="term" value="C:eukaryotic 43S preinitiation complex"/>
    <property type="evidence" value="ECO:0007669"/>
    <property type="project" value="UniProtKB-UniRule"/>
</dbReference>
<dbReference type="GO" id="GO:0033290">
    <property type="term" value="C:eukaryotic 48S preinitiation complex"/>
    <property type="evidence" value="ECO:0007669"/>
    <property type="project" value="UniProtKB-UniRule"/>
</dbReference>
<dbReference type="GO" id="GO:0071540">
    <property type="term" value="C:eukaryotic translation initiation factor 3 complex, eIF3e"/>
    <property type="evidence" value="ECO:0007669"/>
    <property type="project" value="TreeGrafter"/>
</dbReference>
<dbReference type="GO" id="GO:0071541">
    <property type="term" value="C:eukaryotic translation initiation factor 3 complex, eIF3m"/>
    <property type="evidence" value="ECO:0007669"/>
    <property type="project" value="TreeGrafter"/>
</dbReference>
<dbReference type="GO" id="GO:0000131">
    <property type="term" value="C:incipient cellular bud site"/>
    <property type="evidence" value="ECO:0007669"/>
    <property type="project" value="EnsemblFungi"/>
</dbReference>
<dbReference type="GO" id="GO:0043614">
    <property type="term" value="C:multi-eIF complex"/>
    <property type="evidence" value="ECO:0007669"/>
    <property type="project" value="EnsemblFungi"/>
</dbReference>
<dbReference type="GO" id="GO:0003729">
    <property type="term" value="F:mRNA binding"/>
    <property type="evidence" value="ECO:0007669"/>
    <property type="project" value="TreeGrafter"/>
</dbReference>
<dbReference type="GO" id="GO:0003743">
    <property type="term" value="F:translation initiation factor activity"/>
    <property type="evidence" value="ECO:0007669"/>
    <property type="project" value="UniProtKB-UniRule"/>
</dbReference>
<dbReference type="GO" id="GO:0001732">
    <property type="term" value="P:formation of cytoplasmic translation initiation complex"/>
    <property type="evidence" value="ECO:0007669"/>
    <property type="project" value="UniProtKB-UniRule"/>
</dbReference>
<dbReference type="GO" id="GO:0002188">
    <property type="term" value="P:translation reinitiation"/>
    <property type="evidence" value="ECO:0007669"/>
    <property type="project" value="EnsemblFungi"/>
</dbReference>
<dbReference type="FunFam" id="4.10.860.10:FF:000001">
    <property type="entry name" value="Eukaryotic translation initiation factor 3 subunit A"/>
    <property type="match status" value="1"/>
</dbReference>
<dbReference type="Gene3D" id="1.25.40.860">
    <property type="match status" value="2"/>
</dbReference>
<dbReference type="Gene3D" id="4.10.860.10">
    <property type="entry name" value="UVR domain"/>
    <property type="match status" value="1"/>
</dbReference>
<dbReference type="HAMAP" id="MF_03000">
    <property type="entry name" value="eIF3a"/>
    <property type="match status" value="1"/>
</dbReference>
<dbReference type="InterPro" id="IPR027512">
    <property type="entry name" value="EIF3A"/>
</dbReference>
<dbReference type="InterPro" id="IPR054711">
    <property type="entry name" value="eIF3a_PCI_TPR-like"/>
</dbReference>
<dbReference type="InterPro" id="IPR000717">
    <property type="entry name" value="PCI_dom"/>
</dbReference>
<dbReference type="PANTHER" id="PTHR14005:SF0">
    <property type="entry name" value="EUKARYOTIC TRANSLATION INITIATION FACTOR 3 SUBUNIT A"/>
    <property type="match status" value="1"/>
</dbReference>
<dbReference type="PANTHER" id="PTHR14005">
    <property type="entry name" value="EUKARYOTIC TRANSLATION INITIATION FACTOR 3, THETA SUBUNIT"/>
    <property type="match status" value="1"/>
</dbReference>
<dbReference type="Pfam" id="PF22591">
    <property type="entry name" value="eIF3a_PCI_TPR-like"/>
    <property type="match status" value="1"/>
</dbReference>
<dbReference type="Pfam" id="PF01399">
    <property type="entry name" value="PCI"/>
    <property type="match status" value="1"/>
</dbReference>
<dbReference type="SMART" id="SM00088">
    <property type="entry name" value="PINT"/>
    <property type="match status" value="1"/>
</dbReference>
<dbReference type="PROSITE" id="PS50250">
    <property type="entry name" value="PCI"/>
    <property type="match status" value="1"/>
</dbReference>
<accession>A7TL64</accession>
<sequence>MAPPVLRPDNAIKRADELISVGESQAALQSLYEYLTARKIRFAQPSTVEPIVFKFLELGVDLKRGRLIKDALHQYKKLVQGSQDGLSSVGAVARKFIDCVETKMAFEHLKAEESQTEEDDDLEGGVTPENLLKSVYIQDQSVAGFNDEVVTSWLKFTWESYRAVLDLVRNNSQLEITYAGVVNRTMQFCLKYNRKNEFKRLAEMLRQHLDAANYQQSKIGSNIVDLSDSETLQRYLDQRFLQLNVSVKLELWHEAFRSIEDVYHLMKMSKHTPKSSTLANYYENLAKVFLISNAQLLHTATWEKFYRLYQSNPNATEEDFKKYSSIILLSALSTPLDILPTVGYDPQMRLYRLLGLESRPTRNEMIELAKQEDIYKHIDEDIIKLYEIMEINYNADTIKTEIAALLPKLEAKPYFKQYINQLRNVLLRKNYVSLSETENAIPTDALYDKASLPGVLSLPHWDMEKTLLQAAVEDYVSISIDHDSNTVTFFKDPFEIISKAAGTVEEEEEEEEEEGEEVEGEEAETGEEIVEEGEEHENEENKEPEPVITRTTFIRNRLAELSNVLEEIDAFKNASYLEKVKLARETLITQTKDSIENLKQIAEDRAKRAQEQKKKYMASAAVRAEEDAEIRQRQILEEKAALEAKLEQDAHRRLVEKKKREFEDLKQREIQKFIDEFNKKDHAAKIASEEVQGLDIKEIKTLIFSKLSQDKSELEDRMTSSLQKLDHAERAYRKSELPLLRKEAESLKETDMNKFNDMKSKIVDTARAEFDAKMEDHNRLVGVYNDYVSLKDRLTTTVEEKFKLIRAENAAKFEAAKKARIEEVRKQRYEELVAERKAEIEAEEREERAKKQEETARKQKEMEEAAERKSKASSAAAAKSILTGGNDARSAKLDEIARRQREIEQAAERKAQGPSASTEAPDDEGRNLTYAEKMKLRRASKK</sequence>
<comment type="function">
    <text evidence="1">RNA-binding component of the eukaryotic translation initiation factor 3 (eIF-3) complex, which is involved in protein synthesis of a specialized repertoire of mRNAs and, together with other initiation factors, stimulates binding of mRNA and methionyl-tRNAi to the 40S ribosome. The eIF-3 complex specifically targets and initiates translation of a subset of mRNAs involved in cell proliferation.</text>
</comment>
<comment type="subunit">
    <text evidence="1">Component of the eukaryotic translation initiation factor 3 (eIF-3) complex.</text>
</comment>
<comment type="subcellular location">
    <subcellularLocation>
        <location evidence="1">Cytoplasm</location>
    </subcellularLocation>
</comment>
<comment type="similarity">
    <text evidence="1">Belongs to the eIF-3 subunit A family.</text>
</comment>
<evidence type="ECO:0000255" key="1">
    <source>
        <dbReference type="HAMAP-Rule" id="MF_03000"/>
    </source>
</evidence>
<evidence type="ECO:0000255" key="2">
    <source>
        <dbReference type="PROSITE-ProRule" id="PRU01185"/>
    </source>
</evidence>
<evidence type="ECO:0000256" key="3">
    <source>
        <dbReference type="SAM" id="MobiDB-lite"/>
    </source>
</evidence>
<name>EIF3A_VANPO</name>
<proteinExistence type="inferred from homology"/>